<comment type="function">
    <text evidence="1">Ligates lysine onto the cytidine present at position 34 of the AUA codon-specific tRNA(Ile) that contains the anticodon CAU, in an ATP-dependent manner. Cytidine is converted to lysidine, thus changing the amino acid specificity of the tRNA from methionine to isoleucine.</text>
</comment>
<comment type="catalytic activity">
    <reaction evidence="1">
        <text>cytidine(34) in tRNA(Ile2) + L-lysine + ATP = lysidine(34) in tRNA(Ile2) + AMP + diphosphate + H(+)</text>
        <dbReference type="Rhea" id="RHEA:43744"/>
        <dbReference type="Rhea" id="RHEA-COMP:10625"/>
        <dbReference type="Rhea" id="RHEA-COMP:10670"/>
        <dbReference type="ChEBI" id="CHEBI:15378"/>
        <dbReference type="ChEBI" id="CHEBI:30616"/>
        <dbReference type="ChEBI" id="CHEBI:32551"/>
        <dbReference type="ChEBI" id="CHEBI:33019"/>
        <dbReference type="ChEBI" id="CHEBI:82748"/>
        <dbReference type="ChEBI" id="CHEBI:83665"/>
        <dbReference type="ChEBI" id="CHEBI:456215"/>
        <dbReference type="EC" id="6.3.4.19"/>
    </reaction>
</comment>
<comment type="subcellular location">
    <subcellularLocation>
        <location evidence="1">Cytoplasm</location>
    </subcellularLocation>
</comment>
<comment type="domain">
    <text>The N-terminal region contains the highly conserved SGGXDS motif, predicted to be a P-loop motif involved in ATP binding.</text>
</comment>
<comment type="similarity">
    <text evidence="1">Belongs to the tRNA(Ile)-lysidine synthase family.</text>
</comment>
<keyword id="KW-0067">ATP-binding</keyword>
<keyword id="KW-0963">Cytoplasm</keyword>
<keyword id="KW-0436">Ligase</keyword>
<keyword id="KW-0547">Nucleotide-binding</keyword>
<keyword id="KW-1185">Reference proteome</keyword>
<keyword id="KW-0819">tRNA processing</keyword>
<evidence type="ECO:0000255" key="1">
    <source>
        <dbReference type="HAMAP-Rule" id="MF_01161"/>
    </source>
</evidence>
<name>TILS_XYLFT</name>
<gene>
    <name evidence="1" type="primary">tilS</name>
    <name type="ordered locus">PD_1514</name>
</gene>
<dbReference type="EC" id="6.3.4.19" evidence="1"/>
<dbReference type="EMBL" id="AE009442">
    <property type="protein sequence ID" value="AAO29357.1"/>
    <property type="molecule type" value="Genomic_DNA"/>
</dbReference>
<dbReference type="SMR" id="Q87BE2"/>
<dbReference type="KEGG" id="xft:PD_1514"/>
<dbReference type="HOGENOM" id="CLU_018869_2_0_6"/>
<dbReference type="Proteomes" id="UP000002516">
    <property type="component" value="Chromosome"/>
</dbReference>
<dbReference type="GO" id="GO:0005737">
    <property type="term" value="C:cytoplasm"/>
    <property type="evidence" value="ECO:0007669"/>
    <property type="project" value="UniProtKB-SubCell"/>
</dbReference>
<dbReference type="GO" id="GO:0005524">
    <property type="term" value="F:ATP binding"/>
    <property type="evidence" value="ECO:0007669"/>
    <property type="project" value="UniProtKB-UniRule"/>
</dbReference>
<dbReference type="GO" id="GO:0032267">
    <property type="term" value="F:tRNA(Ile)-lysidine synthase activity"/>
    <property type="evidence" value="ECO:0007669"/>
    <property type="project" value="UniProtKB-EC"/>
</dbReference>
<dbReference type="GO" id="GO:0006400">
    <property type="term" value="P:tRNA modification"/>
    <property type="evidence" value="ECO:0007669"/>
    <property type="project" value="UniProtKB-UniRule"/>
</dbReference>
<dbReference type="CDD" id="cd01992">
    <property type="entry name" value="TilS_N"/>
    <property type="match status" value="1"/>
</dbReference>
<dbReference type="Gene3D" id="1.20.59.20">
    <property type="match status" value="1"/>
</dbReference>
<dbReference type="Gene3D" id="3.40.50.620">
    <property type="entry name" value="HUPs"/>
    <property type="match status" value="1"/>
</dbReference>
<dbReference type="HAMAP" id="MF_01161">
    <property type="entry name" value="tRNA_Ile_lys_synt"/>
    <property type="match status" value="1"/>
</dbReference>
<dbReference type="InterPro" id="IPR012796">
    <property type="entry name" value="Lysidine-tRNA-synth_C"/>
</dbReference>
<dbReference type="InterPro" id="IPR014729">
    <property type="entry name" value="Rossmann-like_a/b/a_fold"/>
</dbReference>
<dbReference type="InterPro" id="IPR011063">
    <property type="entry name" value="TilS/TtcA_N"/>
</dbReference>
<dbReference type="InterPro" id="IPR012094">
    <property type="entry name" value="tRNA_Ile_lys_synt"/>
</dbReference>
<dbReference type="InterPro" id="IPR012795">
    <property type="entry name" value="tRNA_Ile_lys_synt_N"/>
</dbReference>
<dbReference type="InterPro" id="IPR015262">
    <property type="entry name" value="tRNA_Ile_lys_synt_subst-bd"/>
</dbReference>
<dbReference type="NCBIfam" id="TIGR02433">
    <property type="entry name" value="lysidine_TilS_C"/>
    <property type="match status" value="1"/>
</dbReference>
<dbReference type="NCBIfam" id="TIGR02432">
    <property type="entry name" value="lysidine_TilS_N"/>
    <property type="match status" value="1"/>
</dbReference>
<dbReference type="PANTHER" id="PTHR43033">
    <property type="entry name" value="TRNA(ILE)-LYSIDINE SYNTHASE-RELATED"/>
    <property type="match status" value="1"/>
</dbReference>
<dbReference type="PANTHER" id="PTHR43033:SF1">
    <property type="entry name" value="TRNA(ILE)-LYSIDINE SYNTHASE-RELATED"/>
    <property type="match status" value="1"/>
</dbReference>
<dbReference type="Pfam" id="PF01171">
    <property type="entry name" value="ATP_bind_3"/>
    <property type="match status" value="1"/>
</dbReference>
<dbReference type="Pfam" id="PF09179">
    <property type="entry name" value="TilS"/>
    <property type="match status" value="1"/>
</dbReference>
<dbReference type="Pfam" id="PF11734">
    <property type="entry name" value="TilS_C"/>
    <property type="match status" value="1"/>
</dbReference>
<dbReference type="SMART" id="SM00977">
    <property type="entry name" value="TilS_C"/>
    <property type="match status" value="1"/>
</dbReference>
<dbReference type="SUPFAM" id="SSF52402">
    <property type="entry name" value="Adenine nucleotide alpha hydrolases-like"/>
    <property type="match status" value="1"/>
</dbReference>
<dbReference type="SUPFAM" id="SSF82829">
    <property type="entry name" value="MesJ substrate recognition domain-like"/>
    <property type="match status" value="1"/>
</dbReference>
<dbReference type="SUPFAM" id="SSF56037">
    <property type="entry name" value="PheT/TilS domain"/>
    <property type="match status" value="1"/>
</dbReference>
<organism>
    <name type="scientific">Xylella fastidiosa (strain Temecula1 / ATCC 700964)</name>
    <dbReference type="NCBI Taxonomy" id="183190"/>
    <lineage>
        <taxon>Bacteria</taxon>
        <taxon>Pseudomonadati</taxon>
        <taxon>Pseudomonadota</taxon>
        <taxon>Gammaproteobacteria</taxon>
        <taxon>Lysobacterales</taxon>
        <taxon>Lysobacteraceae</taxon>
        <taxon>Xylella</taxon>
    </lineage>
</organism>
<feature type="chain" id="PRO_0000181810" description="tRNA(Ile)-lysidine synthase">
    <location>
        <begin position="1"/>
        <end position="437"/>
    </location>
</feature>
<feature type="binding site" evidence="1">
    <location>
        <begin position="22"/>
        <end position="27"/>
    </location>
    <ligand>
        <name>ATP</name>
        <dbReference type="ChEBI" id="CHEBI:30616"/>
    </ligand>
</feature>
<protein>
    <recommendedName>
        <fullName evidence="1">tRNA(Ile)-lysidine synthase</fullName>
        <ecNumber evidence="1">6.3.4.19</ecNumber>
    </recommendedName>
    <alternativeName>
        <fullName evidence="1">tRNA(Ile)-2-lysyl-cytidine synthase</fullName>
    </alternativeName>
    <alternativeName>
        <fullName evidence="1">tRNA(Ile)-lysidine synthetase</fullName>
    </alternativeName>
</protein>
<accession>Q87BE2</accession>
<reference key="1">
    <citation type="journal article" date="2003" name="J. Bacteriol.">
        <title>Comparative analyses of the complete genome sequences of Pierce's disease and citrus variegated chlorosis strains of Xylella fastidiosa.</title>
        <authorList>
            <person name="Van Sluys M.A."/>
            <person name="de Oliveira M.C."/>
            <person name="Monteiro-Vitorello C.B."/>
            <person name="Miyaki C.Y."/>
            <person name="Furlan L.R."/>
            <person name="Camargo L.E.A."/>
            <person name="da Silva A.C.R."/>
            <person name="Moon D.H."/>
            <person name="Takita M.A."/>
            <person name="Lemos E.G.M."/>
            <person name="Machado M.A."/>
            <person name="Ferro M.I.T."/>
            <person name="da Silva F.R."/>
            <person name="Goldman M.H.S."/>
            <person name="Goldman G.H."/>
            <person name="Lemos M.V.F."/>
            <person name="El-Dorry H."/>
            <person name="Tsai S.M."/>
            <person name="Carrer H."/>
            <person name="Carraro D.M."/>
            <person name="de Oliveira R.C."/>
            <person name="Nunes L.R."/>
            <person name="Siqueira W.J."/>
            <person name="Coutinho L.L."/>
            <person name="Kimura E.T."/>
            <person name="Ferro E.S."/>
            <person name="Harakava R."/>
            <person name="Kuramae E.E."/>
            <person name="Marino C.L."/>
            <person name="Giglioti E."/>
            <person name="Abreu I.L."/>
            <person name="Alves L.M.C."/>
            <person name="do Amaral A.M."/>
            <person name="Baia G.S."/>
            <person name="Blanco S.R."/>
            <person name="Brito M.S."/>
            <person name="Cannavan F.S."/>
            <person name="Celestino A.V."/>
            <person name="da Cunha A.F."/>
            <person name="Fenille R.C."/>
            <person name="Ferro J.A."/>
            <person name="Formighieri E.F."/>
            <person name="Kishi L.T."/>
            <person name="Leoni S.G."/>
            <person name="Oliveira A.R."/>
            <person name="Rosa V.E. Jr."/>
            <person name="Sassaki F.T."/>
            <person name="Sena J.A.D."/>
            <person name="de Souza A.A."/>
            <person name="Truffi D."/>
            <person name="Tsukumo F."/>
            <person name="Yanai G.M."/>
            <person name="Zaros L.G."/>
            <person name="Civerolo E.L."/>
            <person name="Simpson A.J.G."/>
            <person name="Almeida N.F. Jr."/>
            <person name="Setubal J.C."/>
            <person name="Kitajima J.P."/>
        </authorList>
    </citation>
    <scope>NUCLEOTIDE SEQUENCE [LARGE SCALE GENOMIC DNA]</scope>
    <source>
        <strain>Temecula1 / ATCC 700964</strain>
    </source>
</reference>
<sequence>MTVSSPFPRIPDPGVPVLVAFSGGLDSTVLLHCLASQPTQRIHGLEAIHIHHGLNENADAWTAHCAAFCTQHDIRLHIARVHVSHNSGQGLEAAARTARRAAFAHTLQHGHYLALAHHCDDQAETWLLRALRGSCDGLAAMRPLTPFAAGHLWRPLLTHSRAQLLDYAQQQHLDWIEDSSNADLRHDRNFLRIHVLPLLHQRWPQATAVLARNAALAAANADLLNAEDAVLLPDLLDPDGALDINALTAHPPARRARLLRAWCARAGAPPLPERGVNIIERELLPARHDSAACFTWSHTEIRRWRLRLYLHRPQPPWPPDWQPLWSGTAPLILPDGGQLHLESTDHETVPGFPHPLRVRARRGGERLILPGRTHSHPLKHLLQDVGIPPWRRASMPLLCDGEQILAVGDALLAAPLVTWLQAHRLKLRWQYHNNTCI</sequence>
<proteinExistence type="inferred from homology"/>